<accession>P35621</accession>
<protein>
    <recommendedName>
        <fullName>Protein DVR-1</fullName>
    </recommendedName>
</protein>
<sequence length="355" mass="40202">MFLVLLRACLLTLSLCSPAEDDGLVQEKLFLSSMGLWSRPKPSHHAAVPSQMWKIFKQASKQTVNDPCVVSEYGVRGNIVRFMQDQGSLISAPAVHSFNCVRKHLFFNMSVLEEVEQLSLAQLEMKFKQDLLLLGPHVFSVDLYRVLKTTLKGVTHESSRKLLQSQTLSPGAHASVLVNLTNLAQSWRKPEKNFGMQLELQVMHLNNMLHDHAYVQIPDIHATLVVVSLNPLQCRSRRKRSASYYLPVTPSNVCKPRRLYIDFKDVGWQDWIIAPQGYLANYCHGECPFPLSESLNGTNHAILQTLVHSFDPKGTPQPCCVPIKLSPISMLYYDNNDNVVLRHYEDMVVDECGCR</sequence>
<comment type="function">
    <text>Serves to facilitate the differentiation of either mesoderm or endoderm either as a cofactor in an instructive signal or by providing permissive environment.</text>
</comment>
<comment type="subunit">
    <text evidence="3">Homodimer.</text>
</comment>
<comment type="subcellular location">
    <subcellularLocation>
        <location evidence="1">Secreted</location>
    </subcellularLocation>
</comment>
<comment type="tissue specificity">
    <text>Abundant in ovaries and eggs, and equally distributed among all blastomeres.</text>
</comment>
<comment type="developmental stage">
    <text>Concentrated in the streaming cytoplasm in just-fertilized eggs. Evenly partitioned during cleavage among all blastomeres. Absent in the yolk cell during cleavage, blastula and gastrula stages. Distributed homogeneously among all cells of the gastrula.</text>
</comment>
<comment type="similarity">
    <text evidence="3">Belongs to the TGF-beta family.</text>
</comment>
<evidence type="ECO:0000250" key="1"/>
<evidence type="ECO:0000255" key="2"/>
<evidence type="ECO:0000305" key="3"/>
<dbReference type="EMBL" id="U00931">
    <property type="protein sequence ID" value="AAC27347.1"/>
    <property type="molecule type" value="mRNA"/>
</dbReference>
<dbReference type="RefSeq" id="NP_571023.1">
    <property type="nucleotide sequence ID" value="NM_130948.1"/>
</dbReference>
<dbReference type="SMR" id="P35621"/>
<dbReference type="FunCoup" id="P35621">
    <property type="interactions" value="1534"/>
</dbReference>
<dbReference type="STRING" id="7955.ENSDARP00000055378"/>
<dbReference type="GlyCosmos" id="P35621">
    <property type="glycosylation" value="3 sites, No reported glycans"/>
</dbReference>
<dbReference type="PaxDb" id="7955-ENSDARP00000055378"/>
<dbReference type="Ensembl" id="ENSDART00000055379">
    <property type="protein sequence ID" value="ENSDARP00000055378"/>
    <property type="gene ID" value="ENSDARG00000037995"/>
</dbReference>
<dbReference type="GeneID" id="30125"/>
<dbReference type="KEGG" id="dre:30125"/>
<dbReference type="AGR" id="ZFIN:ZDB-GENE-980526-389"/>
<dbReference type="CTD" id="9573"/>
<dbReference type="ZFIN" id="ZDB-GENE-980526-389">
    <property type="gene designation" value="gdf3"/>
</dbReference>
<dbReference type="eggNOG" id="KOG3900">
    <property type="taxonomic scope" value="Eukaryota"/>
</dbReference>
<dbReference type="HOGENOM" id="CLU_020515_4_0_1"/>
<dbReference type="InParanoid" id="P35621"/>
<dbReference type="OMA" id="DWRTHSR"/>
<dbReference type="OrthoDB" id="5987191at2759"/>
<dbReference type="PhylomeDB" id="P35621"/>
<dbReference type="TreeFam" id="TF351789"/>
<dbReference type="PRO" id="PR:P35621"/>
<dbReference type="Proteomes" id="UP000000437">
    <property type="component" value="Chromosome 17"/>
</dbReference>
<dbReference type="Bgee" id="ENSDARG00000037995">
    <property type="expression patterns" value="Expressed in cleaving embryo and 32 other cell types or tissues"/>
</dbReference>
<dbReference type="ExpressionAtlas" id="P35621">
    <property type="expression patterns" value="baseline"/>
</dbReference>
<dbReference type="GO" id="GO:0005615">
    <property type="term" value="C:extracellular space"/>
    <property type="evidence" value="ECO:0000318"/>
    <property type="project" value="GO_Central"/>
</dbReference>
<dbReference type="GO" id="GO:0032991">
    <property type="term" value="C:protein-containing complex"/>
    <property type="evidence" value="ECO:0000353"/>
    <property type="project" value="ZFIN"/>
</dbReference>
<dbReference type="GO" id="GO:0005125">
    <property type="term" value="F:cytokine activity"/>
    <property type="evidence" value="ECO:0000318"/>
    <property type="project" value="GO_Central"/>
</dbReference>
<dbReference type="GO" id="GO:0008083">
    <property type="term" value="F:growth factor activity"/>
    <property type="evidence" value="ECO:0007669"/>
    <property type="project" value="UniProtKB-KW"/>
</dbReference>
<dbReference type="GO" id="GO:0009798">
    <property type="term" value="P:axis specification"/>
    <property type="evidence" value="ECO:0000315"/>
    <property type="project" value="ZFIN"/>
</dbReference>
<dbReference type="GO" id="GO:0030509">
    <property type="term" value="P:BMP signaling pathway"/>
    <property type="evidence" value="ECO:0000315"/>
    <property type="project" value="ZFIN"/>
</dbReference>
<dbReference type="GO" id="GO:0060027">
    <property type="term" value="P:convergent extension involved in gastrulation"/>
    <property type="evidence" value="ECO:0000315"/>
    <property type="project" value="ZFIN"/>
</dbReference>
<dbReference type="GO" id="GO:0001947">
    <property type="term" value="P:heart looping"/>
    <property type="evidence" value="ECO:0000315"/>
    <property type="project" value="ZFIN"/>
</dbReference>
<dbReference type="GO" id="GO:0060972">
    <property type="term" value="P:left/right pattern formation"/>
    <property type="evidence" value="ECO:0000315"/>
    <property type="project" value="ZFIN"/>
</dbReference>
<dbReference type="GO" id="GO:0048666">
    <property type="term" value="P:neuron development"/>
    <property type="evidence" value="ECO:0000315"/>
    <property type="project" value="ZFIN"/>
</dbReference>
<dbReference type="GO" id="GO:0038092">
    <property type="term" value="P:nodal signaling pathway"/>
    <property type="evidence" value="ECO:0000315"/>
    <property type="project" value="ZFIN"/>
</dbReference>
<dbReference type="GO" id="GO:0051781">
    <property type="term" value="P:positive regulation of cell division"/>
    <property type="evidence" value="ECO:0007669"/>
    <property type="project" value="UniProtKB-KW"/>
</dbReference>
<dbReference type="GO" id="GO:1904086">
    <property type="term" value="P:regulation of epiboly involved in gastrulation with mouth forming second"/>
    <property type="evidence" value="ECO:0000315"/>
    <property type="project" value="CACAO"/>
</dbReference>
<dbReference type="GO" id="GO:1900107">
    <property type="term" value="P:regulation of nodal signaling pathway"/>
    <property type="evidence" value="ECO:0000315"/>
    <property type="project" value="ZFIN"/>
</dbReference>
<dbReference type="CDD" id="cd13764">
    <property type="entry name" value="TGF_beta_GDF1_3_like"/>
    <property type="match status" value="1"/>
</dbReference>
<dbReference type="FunFam" id="2.10.90.10:FF:000001">
    <property type="entry name" value="Bone morphogenetic protein 4"/>
    <property type="match status" value="1"/>
</dbReference>
<dbReference type="FunFam" id="2.60.120.970:FF:000020">
    <property type="entry name" value="growth/differentiation factor 3"/>
    <property type="match status" value="1"/>
</dbReference>
<dbReference type="Gene3D" id="2.60.120.970">
    <property type="match status" value="1"/>
</dbReference>
<dbReference type="Gene3D" id="2.10.90.10">
    <property type="entry name" value="Cystine-knot cytokines"/>
    <property type="match status" value="1"/>
</dbReference>
<dbReference type="InterPro" id="IPR029034">
    <property type="entry name" value="Cystine-knot_cytokine"/>
</dbReference>
<dbReference type="InterPro" id="IPR001839">
    <property type="entry name" value="TGF-b_C"/>
</dbReference>
<dbReference type="InterPro" id="IPR001111">
    <property type="entry name" value="TGF-b_propeptide"/>
</dbReference>
<dbReference type="InterPro" id="IPR015615">
    <property type="entry name" value="TGF-beta-rel"/>
</dbReference>
<dbReference type="InterPro" id="IPR017948">
    <property type="entry name" value="TGFb_CS"/>
</dbReference>
<dbReference type="PANTHER" id="PTHR11848:SF300">
    <property type="entry name" value="CVG1 PROTEIN"/>
    <property type="match status" value="1"/>
</dbReference>
<dbReference type="PANTHER" id="PTHR11848">
    <property type="entry name" value="TGF-BETA FAMILY"/>
    <property type="match status" value="1"/>
</dbReference>
<dbReference type="Pfam" id="PF00019">
    <property type="entry name" value="TGF_beta"/>
    <property type="match status" value="1"/>
</dbReference>
<dbReference type="Pfam" id="PF00688">
    <property type="entry name" value="TGFb_propeptide"/>
    <property type="match status" value="1"/>
</dbReference>
<dbReference type="SMART" id="SM00204">
    <property type="entry name" value="TGFB"/>
    <property type="match status" value="1"/>
</dbReference>
<dbReference type="SUPFAM" id="SSF57501">
    <property type="entry name" value="Cystine-knot cytokines"/>
    <property type="match status" value="1"/>
</dbReference>
<dbReference type="PROSITE" id="PS00250">
    <property type="entry name" value="TGF_BETA_1"/>
    <property type="match status" value="1"/>
</dbReference>
<dbReference type="PROSITE" id="PS51362">
    <property type="entry name" value="TGF_BETA_2"/>
    <property type="match status" value="1"/>
</dbReference>
<keyword id="KW-0165">Cleavage on pair of basic residues</keyword>
<keyword id="KW-1015">Disulfide bond</keyword>
<keyword id="KW-0325">Glycoprotein</keyword>
<keyword id="KW-0339">Growth factor</keyword>
<keyword id="KW-0497">Mitogen</keyword>
<keyword id="KW-1185">Reference proteome</keyword>
<keyword id="KW-0964">Secreted</keyword>
<keyword id="KW-0732">Signal</keyword>
<name>DVR1_DANRE</name>
<organism>
    <name type="scientific">Danio rerio</name>
    <name type="common">Zebrafish</name>
    <name type="synonym">Brachydanio rerio</name>
    <dbReference type="NCBI Taxonomy" id="7955"/>
    <lineage>
        <taxon>Eukaryota</taxon>
        <taxon>Metazoa</taxon>
        <taxon>Chordata</taxon>
        <taxon>Craniata</taxon>
        <taxon>Vertebrata</taxon>
        <taxon>Euteleostomi</taxon>
        <taxon>Actinopterygii</taxon>
        <taxon>Neopterygii</taxon>
        <taxon>Teleostei</taxon>
        <taxon>Ostariophysi</taxon>
        <taxon>Cypriniformes</taxon>
        <taxon>Danionidae</taxon>
        <taxon>Danioninae</taxon>
        <taxon>Danio</taxon>
    </lineage>
</organism>
<feature type="signal peptide" evidence="2">
    <location>
        <begin position="1"/>
        <end position="15"/>
    </location>
</feature>
<feature type="propeptide" id="PRO_0000033816" evidence="2">
    <location>
        <begin position="16"/>
        <end position="240"/>
    </location>
</feature>
<feature type="chain" id="PRO_0000033817" description="Protein DVR-1">
    <location>
        <begin position="241"/>
        <end position="355"/>
    </location>
</feature>
<feature type="glycosylation site" description="N-linked (GlcNAc...) asparagine" evidence="2">
    <location>
        <position position="108"/>
    </location>
</feature>
<feature type="glycosylation site" description="N-linked (GlcNAc...) asparagine" evidence="2">
    <location>
        <position position="179"/>
    </location>
</feature>
<feature type="glycosylation site" description="N-linked (GlcNAc...) asparagine" evidence="2">
    <location>
        <position position="296"/>
    </location>
</feature>
<feature type="disulfide bond" evidence="1">
    <location>
        <begin position="254"/>
        <end position="320"/>
    </location>
</feature>
<feature type="disulfide bond" evidence="1">
    <location>
        <begin position="283"/>
        <end position="352"/>
    </location>
</feature>
<feature type="disulfide bond" evidence="1">
    <location>
        <begin position="287"/>
        <end position="354"/>
    </location>
</feature>
<feature type="disulfide bond" description="Interchain" evidence="1">
    <location>
        <position position="319"/>
    </location>
</feature>
<gene>
    <name type="primary">dvr1</name>
    <name type="synonym">dvr-1</name>
    <name type="synonym">vg1</name>
</gene>
<reference key="1">
    <citation type="journal article" date="1993" name="Dev. Biol.">
        <title>The DVR-1 (Vg1) transcript of zebrafish is maternally supplied and distributed throughout the embryo.</title>
        <authorList>
            <person name="Helde K.A."/>
            <person name="Grunwald D.J."/>
        </authorList>
    </citation>
    <scope>NUCLEOTIDE SEQUENCE [MRNA]</scope>
    <source>
        <tissue>Embryo</tissue>
    </source>
</reference>
<proteinExistence type="evidence at transcript level"/>